<organism>
    <name type="scientific">Gloeobacter violaceus (strain ATCC 29082 / PCC 7421)</name>
    <dbReference type="NCBI Taxonomy" id="251221"/>
    <lineage>
        <taxon>Bacteria</taxon>
        <taxon>Bacillati</taxon>
        <taxon>Cyanobacteriota</taxon>
        <taxon>Cyanophyceae</taxon>
        <taxon>Gloeobacterales</taxon>
        <taxon>Gloeobacteraceae</taxon>
        <taxon>Gloeobacter</taxon>
    </lineage>
</organism>
<accession>Q7NDK7</accession>
<protein>
    <recommendedName>
        <fullName evidence="1">Aspartate 1-decarboxylase 2</fullName>
        <ecNumber evidence="1">4.1.1.11</ecNumber>
    </recommendedName>
    <alternativeName>
        <fullName evidence="1">Aspartate alpha-decarboxylase 2</fullName>
    </alternativeName>
    <component>
        <recommendedName>
            <fullName evidence="1">Aspartate 1-decarboxylase beta chain</fullName>
        </recommendedName>
    </component>
    <component>
        <recommendedName>
            <fullName evidence="1">Aspartate 1-decarboxylase alpha chain</fullName>
        </recommendedName>
    </component>
</protein>
<keyword id="KW-0068">Autocatalytic cleavage</keyword>
<keyword id="KW-0963">Cytoplasm</keyword>
<keyword id="KW-0210">Decarboxylase</keyword>
<keyword id="KW-0456">Lyase</keyword>
<keyword id="KW-0566">Pantothenate biosynthesis</keyword>
<keyword id="KW-0670">Pyruvate</keyword>
<keyword id="KW-1185">Reference proteome</keyword>
<keyword id="KW-0704">Schiff base</keyword>
<keyword id="KW-0865">Zymogen</keyword>
<proteinExistence type="inferred from homology"/>
<reference key="1">
    <citation type="journal article" date="2003" name="DNA Res.">
        <title>Complete genome structure of Gloeobacter violaceus PCC 7421, a cyanobacterium that lacks thylakoids.</title>
        <authorList>
            <person name="Nakamura Y."/>
            <person name="Kaneko T."/>
            <person name="Sato S."/>
            <person name="Mimuro M."/>
            <person name="Miyashita H."/>
            <person name="Tsuchiya T."/>
            <person name="Sasamoto S."/>
            <person name="Watanabe A."/>
            <person name="Kawashima K."/>
            <person name="Kishida Y."/>
            <person name="Kiyokawa C."/>
            <person name="Kohara M."/>
            <person name="Matsumoto M."/>
            <person name="Matsuno A."/>
            <person name="Nakazaki N."/>
            <person name="Shimpo S."/>
            <person name="Takeuchi C."/>
            <person name="Yamada M."/>
            <person name="Tabata S."/>
        </authorList>
    </citation>
    <scope>NUCLEOTIDE SEQUENCE [LARGE SCALE GENOMIC DNA]</scope>
    <source>
        <strain>ATCC 29082 / PCC 7421</strain>
    </source>
</reference>
<sequence length="125" mass="13053">MLRTVLLGKIHRATVTGACLEYVGSISVDSRLLAAAGILPHEQVHVVNLNNGARLVTYAIEASEGSGAVVLNGAAARLAAAGDQVIVLAYGQGTAVELEHHQPQVVYVDAQNRIVSVHRSVEHAG</sequence>
<feature type="chain" id="PRO_0000023087" description="Aspartate 1-decarboxylase beta chain" evidence="1">
    <location>
        <begin position="1"/>
        <end position="24"/>
    </location>
</feature>
<feature type="chain" id="PRO_0000023088" description="Aspartate 1-decarboxylase alpha chain" evidence="1">
    <location>
        <begin position="25"/>
        <end position="125"/>
    </location>
</feature>
<feature type="active site" description="Schiff-base intermediate with substrate; via pyruvic acid" evidence="1">
    <location>
        <position position="25"/>
    </location>
</feature>
<feature type="active site" description="Proton donor" evidence="1">
    <location>
        <position position="58"/>
    </location>
</feature>
<feature type="binding site" evidence="1">
    <location>
        <position position="57"/>
    </location>
    <ligand>
        <name>substrate</name>
    </ligand>
</feature>
<feature type="binding site" evidence="1">
    <location>
        <begin position="73"/>
        <end position="75"/>
    </location>
    <ligand>
        <name>substrate</name>
    </ligand>
</feature>
<feature type="modified residue" description="Pyruvic acid (Ser)" evidence="1">
    <location>
        <position position="25"/>
    </location>
</feature>
<gene>
    <name evidence="1" type="primary">panD2</name>
    <name type="ordered locus">glr4228</name>
</gene>
<dbReference type="EC" id="4.1.1.11" evidence="1"/>
<dbReference type="EMBL" id="BA000045">
    <property type="protein sequence ID" value="BAC92169.1"/>
    <property type="molecule type" value="Genomic_DNA"/>
</dbReference>
<dbReference type="RefSeq" id="NP_927174.1">
    <property type="nucleotide sequence ID" value="NC_005125.1"/>
</dbReference>
<dbReference type="RefSeq" id="WP_011144212.1">
    <property type="nucleotide sequence ID" value="NC_005125.1"/>
</dbReference>
<dbReference type="SMR" id="Q7NDK7"/>
<dbReference type="FunCoup" id="Q7NDK7">
    <property type="interactions" value="93"/>
</dbReference>
<dbReference type="STRING" id="251221.gene:10761747"/>
<dbReference type="EnsemblBacteria" id="BAC92169">
    <property type="protein sequence ID" value="BAC92169"/>
    <property type="gene ID" value="BAC92169"/>
</dbReference>
<dbReference type="KEGG" id="gvi:glr4228"/>
<dbReference type="PATRIC" id="fig|251221.4.peg.4260"/>
<dbReference type="eggNOG" id="COG0853">
    <property type="taxonomic scope" value="Bacteria"/>
</dbReference>
<dbReference type="HOGENOM" id="CLU_115305_2_0_3"/>
<dbReference type="InParanoid" id="Q7NDK7"/>
<dbReference type="OrthoDB" id="9803983at2"/>
<dbReference type="PhylomeDB" id="Q7NDK7"/>
<dbReference type="UniPathway" id="UPA00028">
    <property type="reaction ID" value="UER00002"/>
</dbReference>
<dbReference type="Proteomes" id="UP000000557">
    <property type="component" value="Chromosome"/>
</dbReference>
<dbReference type="GO" id="GO:0005829">
    <property type="term" value="C:cytosol"/>
    <property type="evidence" value="ECO:0000318"/>
    <property type="project" value="GO_Central"/>
</dbReference>
<dbReference type="GO" id="GO:0004068">
    <property type="term" value="F:aspartate 1-decarboxylase activity"/>
    <property type="evidence" value="ECO:0000318"/>
    <property type="project" value="GO_Central"/>
</dbReference>
<dbReference type="GO" id="GO:0006523">
    <property type="term" value="P:alanine biosynthetic process"/>
    <property type="evidence" value="ECO:0000318"/>
    <property type="project" value="GO_Central"/>
</dbReference>
<dbReference type="GO" id="GO:0015940">
    <property type="term" value="P:pantothenate biosynthetic process"/>
    <property type="evidence" value="ECO:0000318"/>
    <property type="project" value="GO_Central"/>
</dbReference>
<dbReference type="CDD" id="cd06919">
    <property type="entry name" value="Asp_decarbox"/>
    <property type="match status" value="1"/>
</dbReference>
<dbReference type="Gene3D" id="2.40.40.20">
    <property type="match status" value="1"/>
</dbReference>
<dbReference type="HAMAP" id="MF_00446">
    <property type="entry name" value="PanD"/>
    <property type="match status" value="1"/>
</dbReference>
<dbReference type="InterPro" id="IPR009010">
    <property type="entry name" value="Asp_de-COase-like_dom_sf"/>
</dbReference>
<dbReference type="InterPro" id="IPR003190">
    <property type="entry name" value="Asp_decarbox"/>
</dbReference>
<dbReference type="NCBIfam" id="TIGR00223">
    <property type="entry name" value="panD"/>
    <property type="match status" value="1"/>
</dbReference>
<dbReference type="PANTHER" id="PTHR21012">
    <property type="entry name" value="ASPARTATE 1-DECARBOXYLASE"/>
    <property type="match status" value="1"/>
</dbReference>
<dbReference type="PANTHER" id="PTHR21012:SF0">
    <property type="entry name" value="ASPARTATE 1-DECARBOXYLASE"/>
    <property type="match status" value="1"/>
</dbReference>
<dbReference type="Pfam" id="PF02261">
    <property type="entry name" value="Asp_decarbox"/>
    <property type="match status" value="1"/>
</dbReference>
<dbReference type="PIRSF" id="PIRSF006246">
    <property type="entry name" value="Asp_decarbox"/>
    <property type="match status" value="1"/>
</dbReference>
<dbReference type="SUPFAM" id="SSF50692">
    <property type="entry name" value="ADC-like"/>
    <property type="match status" value="1"/>
</dbReference>
<evidence type="ECO:0000255" key="1">
    <source>
        <dbReference type="HAMAP-Rule" id="MF_00446"/>
    </source>
</evidence>
<name>PAND2_GLOVI</name>
<comment type="function">
    <text evidence="1">Catalyzes the pyruvoyl-dependent decarboxylation of aspartate to produce beta-alanine.</text>
</comment>
<comment type="catalytic activity">
    <reaction evidence="1">
        <text>L-aspartate + H(+) = beta-alanine + CO2</text>
        <dbReference type="Rhea" id="RHEA:19497"/>
        <dbReference type="ChEBI" id="CHEBI:15378"/>
        <dbReference type="ChEBI" id="CHEBI:16526"/>
        <dbReference type="ChEBI" id="CHEBI:29991"/>
        <dbReference type="ChEBI" id="CHEBI:57966"/>
        <dbReference type="EC" id="4.1.1.11"/>
    </reaction>
</comment>
<comment type="cofactor">
    <cofactor evidence="1">
        <name>pyruvate</name>
        <dbReference type="ChEBI" id="CHEBI:15361"/>
    </cofactor>
    <text evidence="1">Binds 1 pyruvoyl group covalently per subunit.</text>
</comment>
<comment type="pathway">
    <text evidence="1">Cofactor biosynthesis; (R)-pantothenate biosynthesis; beta-alanine from L-aspartate: step 1/1.</text>
</comment>
<comment type="subunit">
    <text evidence="1">Heterooctamer of four alpha and four beta subunits.</text>
</comment>
<comment type="subcellular location">
    <subcellularLocation>
        <location evidence="1">Cytoplasm</location>
    </subcellularLocation>
</comment>
<comment type="PTM">
    <text evidence="1">Is synthesized initially as an inactive proenzyme, which is activated by self-cleavage at a specific serine bond to produce a beta-subunit with a hydroxyl group at its C-terminus and an alpha-subunit with a pyruvoyl group at its N-terminus.</text>
</comment>
<comment type="similarity">
    <text evidence="1">Belongs to the PanD family.</text>
</comment>